<dbReference type="EC" id="2.1.3.2" evidence="1"/>
<dbReference type="EMBL" id="CP000266">
    <property type="protein sequence ID" value="ABF06229.1"/>
    <property type="molecule type" value="Genomic_DNA"/>
</dbReference>
<dbReference type="RefSeq" id="WP_000013046.1">
    <property type="nucleotide sequence ID" value="NC_008258.1"/>
</dbReference>
<dbReference type="SMR" id="Q0SXI6"/>
<dbReference type="GeneID" id="93777579"/>
<dbReference type="KEGG" id="sfv:SFV_4247"/>
<dbReference type="HOGENOM" id="CLU_043846_1_2_6"/>
<dbReference type="UniPathway" id="UPA00070">
    <property type="reaction ID" value="UER00116"/>
</dbReference>
<dbReference type="Proteomes" id="UP000000659">
    <property type="component" value="Chromosome"/>
</dbReference>
<dbReference type="GO" id="GO:0005829">
    <property type="term" value="C:cytosol"/>
    <property type="evidence" value="ECO:0007669"/>
    <property type="project" value="TreeGrafter"/>
</dbReference>
<dbReference type="GO" id="GO:0016597">
    <property type="term" value="F:amino acid binding"/>
    <property type="evidence" value="ECO:0007669"/>
    <property type="project" value="InterPro"/>
</dbReference>
<dbReference type="GO" id="GO:0004070">
    <property type="term" value="F:aspartate carbamoyltransferase activity"/>
    <property type="evidence" value="ECO:0007669"/>
    <property type="project" value="UniProtKB-UniRule"/>
</dbReference>
<dbReference type="GO" id="GO:0006207">
    <property type="term" value="P:'de novo' pyrimidine nucleobase biosynthetic process"/>
    <property type="evidence" value="ECO:0007669"/>
    <property type="project" value="InterPro"/>
</dbReference>
<dbReference type="GO" id="GO:0044205">
    <property type="term" value="P:'de novo' UMP biosynthetic process"/>
    <property type="evidence" value="ECO:0007669"/>
    <property type="project" value="UniProtKB-UniRule"/>
</dbReference>
<dbReference type="GO" id="GO:0006520">
    <property type="term" value="P:amino acid metabolic process"/>
    <property type="evidence" value="ECO:0007669"/>
    <property type="project" value="InterPro"/>
</dbReference>
<dbReference type="FunFam" id="3.40.50.1370:FF:000001">
    <property type="entry name" value="Aspartate carbamoyltransferase"/>
    <property type="match status" value="1"/>
</dbReference>
<dbReference type="FunFam" id="3.40.50.1370:FF:000002">
    <property type="entry name" value="Aspartate carbamoyltransferase 2"/>
    <property type="match status" value="1"/>
</dbReference>
<dbReference type="Gene3D" id="3.40.50.1370">
    <property type="entry name" value="Aspartate/ornithine carbamoyltransferase"/>
    <property type="match status" value="2"/>
</dbReference>
<dbReference type="HAMAP" id="MF_00001">
    <property type="entry name" value="Asp_carb_tr"/>
    <property type="match status" value="1"/>
</dbReference>
<dbReference type="InterPro" id="IPR006132">
    <property type="entry name" value="Asp/Orn_carbamoyltranf_P-bd"/>
</dbReference>
<dbReference type="InterPro" id="IPR006130">
    <property type="entry name" value="Asp/Orn_carbamoylTrfase"/>
</dbReference>
<dbReference type="InterPro" id="IPR036901">
    <property type="entry name" value="Asp/Orn_carbamoylTrfase_sf"/>
</dbReference>
<dbReference type="InterPro" id="IPR002082">
    <property type="entry name" value="Asp_carbamoyltransf"/>
</dbReference>
<dbReference type="InterPro" id="IPR006131">
    <property type="entry name" value="Asp_carbamoyltransf_Asp/Orn-bd"/>
</dbReference>
<dbReference type="NCBIfam" id="TIGR00670">
    <property type="entry name" value="asp_carb_tr"/>
    <property type="match status" value="1"/>
</dbReference>
<dbReference type="NCBIfam" id="NF002032">
    <property type="entry name" value="PRK00856.1"/>
    <property type="match status" value="1"/>
</dbReference>
<dbReference type="PANTHER" id="PTHR45753:SF6">
    <property type="entry name" value="ASPARTATE CARBAMOYLTRANSFERASE"/>
    <property type="match status" value="1"/>
</dbReference>
<dbReference type="PANTHER" id="PTHR45753">
    <property type="entry name" value="ORNITHINE CARBAMOYLTRANSFERASE, MITOCHONDRIAL"/>
    <property type="match status" value="1"/>
</dbReference>
<dbReference type="Pfam" id="PF00185">
    <property type="entry name" value="OTCace"/>
    <property type="match status" value="1"/>
</dbReference>
<dbReference type="Pfam" id="PF02729">
    <property type="entry name" value="OTCace_N"/>
    <property type="match status" value="1"/>
</dbReference>
<dbReference type="PRINTS" id="PR00100">
    <property type="entry name" value="AOTCASE"/>
</dbReference>
<dbReference type="PRINTS" id="PR00101">
    <property type="entry name" value="ATCASE"/>
</dbReference>
<dbReference type="SUPFAM" id="SSF53671">
    <property type="entry name" value="Aspartate/ornithine carbamoyltransferase"/>
    <property type="match status" value="1"/>
</dbReference>
<dbReference type="PROSITE" id="PS00097">
    <property type="entry name" value="CARBAMOYLTRANSFERASE"/>
    <property type="match status" value="1"/>
</dbReference>
<reference key="1">
    <citation type="journal article" date="2006" name="BMC Genomics">
        <title>Complete genome sequence of Shigella flexneri 5b and comparison with Shigella flexneri 2a.</title>
        <authorList>
            <person name="Nie H."/>
            <person name="Yang F."/>
            <person name="Zhang X."/>
            <person name="Yang J."/>
            <person name="Chen L."/>
            <person name="Wang J."/>
            <person name="Xiong Z."/>
            <person name="Peng J."/>
            <person name="Sun L."/>
            <person name="Dong J."/>
            <person name="Xue Y."/>
            <person name="Xu X."/>
            <person name="Chen S."/>
            <person name="Yao Z."/>
            <person name="Shen Y."/>
            <person name="Jin Q."/>
        </authorList>
    </citation>
    <scope>NUCLEOTIDE SEQUENCE [LARGE SCALE GENOMIC DNA]</scope>
    <source>
        <strain>8401</strain>
    </source>
</reference>
<name>PYRB_SHIF8</name>
<feature type="chain" id="PRO_0000301620" description="Aspartate carbamoyltransferase catalytic subunit">
    <location>
        <begin position="1"/>
        <end position="311"/>
    </location>
</feature>
<feature type="binding site" evidence="1">
    <location>
        <position position="55"/>
    </location>
    <ligand>
        <name>carbamoyl phosphate</name>
        <dbReference type="ChEBI" id="CHEBI:58228"/>
    </ligand>
</feature>
<feature type="binding site" evidence="1">
    <location>
        <position position="56"/>
    </location>
    <ligand>
        <name>carbamoyl phosphate</name>
        <dbReference type="ChEBI" id="CHEBI:58228"/>
    </ligand>
</feature>
<feature type="binding site" evidence="1">
    <location>
        <position position="85"/>
    </location>
    <ligand>
        <name>L-aspartate</name>
        <dbReference type="ChEBI" id="CHEBI:29991"/>
    </ligand>
</feature>
<feature type="binding site" evidence="1">
    <location>
        <position position="106"/>
    </location>
    <ligand>
        <name>carbamoyl phosphate</name>
        <dbReference type="ChEBI" id="CHEBI:58228"/>
    </ligand>
</feature>
<feature type="binding site" evidence="1">
    <location>
        <position position="135"/>
    </location>
    <ligand>
        <name>carbamoyl phosphate</name>
        <dbReference type="ChEBI" id="CHEBI:58228"/>
    </ligand>
</feature>
<feature type="binding site" evidence="1">
    <location>
        <position position="138"/>
    </location>
    <ligand>
        <name>carbamoyl phosphate</name>
        <dbReference type="ChEBI" id="CHEBI:58228"/>
    </ligand>
</feature>
<feature type="binding site" evidence="1">
    <location>
        <position position="168"/>
    </location>
    <ligand>
        <name>L-aspartate</name>
        <dbReference type="ChEBI" id="CHEBI:29991"/>
    </ligand>
</feature>
<feature type="binding site" evidence="1">
    <location>
        <position position="230"/>
    </location>
    <ligand>
        <name>L-aspartate</name>
        <dbReference type="ChEBI" id="CHEBI:29991"/>
    </ligand>
</feature>
<feature type="binding site" evidence="1">
    <location>
        <position position="268"/>
    </location>
    <ligand>
        <name>carbamoyl phosphate</name>
        <dbReference type="ChEBI" id="CHEBI:58228"/>
    </ligand>
</feature>
<feature type="binding site" evidence="1">
    <location>
        <position position="269"/>
    </location>
    <ligand>
        <name>carbamoyl phosphate</name>
        <dbReference type="ChEBI" id="CHEBI:58228"/>
    </ligand>
</feature>
<keyword id="KW-0665">Pyrimidine biosynthesis</keyword>
<keyword id="KW-0808">Transferase</keyword>
<sequence>MANPLYQKHIISINDLSRDDLNLVLATAAKLKANPQPELLKHKVIASCFFEASTRTRLSFETSMHRLGASVVGFSDSANTSLGKKGETLADTISVISTYVDAIVMRHPQEGAARLATEFSGNVPVLNAGDGSNQHPTQTLLDLFTIQETQGRLDNLHVAMVGDLKYGRTVHSLTQALAKFDGNRFYFIAPDALAMPQYILDMLDEKGIAWSLHSSIEEVMAEVDILYMTRVQKERLDPSEYANVKAQFVLRASDLHNAKANMKVLHPLPRVDEIATDVDKTPHAWYFQQAGNGIFARQALLALVLNRDLVL</sequence>
<proteinExistence type="inferred from homology"/>
<protein>
    <recommendedName>
        <fullName evidence="1">Aspartate carbamoyltransferase catalytic subunit</fullName>
        <ecNumber evidence="1">2.1.3.2</ecNumber>
    </recommendedName>
    <alternativeName>
        <fullName evidence="1">Aspartate transcarbamylase</fullName>
        <shortName evidence="1">ATCase</shortName>
    </alternativeName>
</protein>
<accession>Q0SXI6</accession>
<comment type="function">
    <text evidence="1">Catalyzes the condensation of carbamoyl phosphate and aspartate to form carbamoyl aspartate and inorganic phosphate, the committed step in the de novo pyrimidine nucleotide biosynthesis pathway.</text>
</comment>
<comment type="catalytic activity">
    <reaction evidence="1">
        <text>carbamoyl phosphate + L-aspartate = N-carbamoyl-L-aspartate + phosphate + H(+)</text>
        <dbReference type="Rhea" id="RHEA:20013"/>
        <dbReference type="ChEBI" id="CHEBI:15378"/>
        <dbReference type="ChEBI" id="CHEBI:29991"/>
        <dbReference type="ChEBI" id="CHEBI:32814"/>
        <dbReference type="ChEBI" id="CHEBI:43474"/>
        <dbReference type="ChEBI" id="CHEBI:58228"/>
        <dbReference type="EC" id="2.1.3.2"/>
    </reaction>
</comment>
<comment type="pathway">
    <text evidence="1">Pyrimidine metabolism; UMP biosynthesis via de novo pathway; (S)-dihydroorotate from bicarbonate: step 2/3.</text>
</comment>
<comment type="subunit">
    <text evidence="1">Heterododecamer (2C3:3R2) of six catalytic PyrB chains organized as two trimers (C3), and six regulatory PyrI chains organized as three dimers (R2).</text>
</comment>
<comment type="similarity">
    <text evidence="1">Belongs to the aspartate/ornithine carbamoyltransferase superfamily. ATCase family.</text>
</comment>
<gene>
    <name evidence="1" type="primary">pyrB</name>
    <name type="ordered locus">SFV_4247</name>
</gene>
<evidence type="ECO:0000255" key="1">
    <source>
        <dbReference type="HAMAP-Rule" id="MF_00001"/>
    </source>
</evidence>
<organism>
    <name type="scientific">Shigella flexneri serotype 5b (strain 8401)</name>
    <dbReference type="NCBI Taxonomy" id="373384"/>
    <lineage>
        <taxon>Bacteria</taxon>
        <taxon>Pseudomonadati</taxon>
        <taxon>Pseudomonadota</taxon>
        <taxon>Gammaproteobacteria</taxon>
        <taxon>Enterobacterales</taxon>
        <taxon>Enterobacteriaceae</taxon>
        <taxon>Shigella</taxon>
    </lineage>
</organism>